<accession>O10695</accession>
<feature type="signal peptide" evidence="2">
    <location>
        <begin position="1"/>
        <end position="50"/>
    </location>
</feature>
<feature type="chain" id="PRO_0000369099" description="Outer capsid glycoprotein VP7" evidence="2">
    <location>
        <begin position="51"/>
        <end position="326"/>
    </location>
</feature>
<feature type="region of interest" description="CNP motif; interaction with ITGAV/ITGB3" evidence="2">
    <location>
        <begin position="165"/>
        <end position="167"/>
    </location>
</feature>
<feature type="region of interest" description="LVD motif; interaction with ITGA4/ITGB1 heterodimer" evidence="2">
    <location>
        <begin position="237"/>
        <end position="239"/>
    </location>
</feature>
<feature type="region of interest" description="GPR motif; interaction with ITGAX/ITGB2" evidence="2">
    <location>
        <begin position="253"/>
        <end position="255"/>
    </location>
</feature>
<feature type="binding site" evidence="2">
    <location>
        <position position="95"/>
    </location>
    <ligand>
        <name>Ca(2+)</name>
        <dbReference type="ChEBI" id="CHEBI:29108"/>
        <label>1</label>
    </ligand>
</feature>
<feature type="binding site" evidence="2">
    <location>
        <position position="177"/>
    </location>
    <ligand>
        <name>Ca(2+)</name>
        <dbReference type="ChEBI" id="CHEBI:29108"/>
        <label>2</label>
    </ligand>
</feature>
<feature type="binding site" evidence="2">
    <location>
        <position position="206"/>
    </location>
    <ligand>
        <name>Ca(2+)</name>
        <dbReference type="ChEBI" id="CHEBI:29108"/>
        <label>1</label>
    </ligand>
</feature>
<feature type="binding site" evidence="2">
    <location>
        <position position="214"/>
    </location>
    <ligand>
        <name>Ca(2+)</name>
        <dbReference type="ChEBI" id="CHEBI:29108"/>
        <label>1</label>
    </ligand>
</feature>
<feature type="binding site" evidence="2">
    <location>
        <position position="216"/>
    </location>
    <ligand>
        <name>Ca(2+)</name>
        <dbReference type="ChEBI" id="CHEBI:29108"/>
        <label>1</label>
    </ligand>
</feature>
<feature type="binding site" evidence="2">
    <location>
        <position position="228"/>
    </location>
    <ligand>
        <name>Ca(2+)</name>
        <dbReference type="ChEBI" id="CHEBI:29108"/>
        <label>2</label>
    </ligand>
</feature>
<feature type="binding site" evidence="2">
    <location>
        <position position="229"/>
    </location>
    <ligand>
        <name>Ca(2+)</name>
        <dbReference type="ChEBI" id="CHEBI:29108"/>
        <label>2</label>
    </ligand>
</feature>
<feature type="binding site" evidence="2">
    <location>
        <position position="231"/>
    </location>
    <ligand>
        <name>Ca(2+)</name>
        <dbReference type="ChEBI" id="CHEBI:29108"/>
        <label>2</label>
    </ligand>
</feature>
<feature type="binding site" evidence="2">
    <location>
        <position position="301"/>
    </location>
    <ligand>
        <name>Ca(2+)</name>
        <dbReference type="ChEBI" id="CHEBI:29108"/>
        <label>2</label>
    </ligand>
</feature>
<feature type="glycosylation site" description="N-linked (GlcNAc...) asparagine; by host" evidence="1">
    <location>
        <position position="69"/>
    </location>
</feature>
<feature type="disulfide bond" evidence="2">
    <location>
        <begin position="82"/>
        <end position="135"/>
    </location>
</feature>
<feature type="disulfide bond" evidence="2">
    <location>
        <begin position="165"/>
        <end position="249"/>
    </location>
</feature>
<feature type="disulfide bond" evidence="2">
    <location>
        <begin position="191"/>
        <end position="244"/>
    </location>
</feature>
<feature type="disulfide bond" evidence="2">
    <location>
        <begin position="196"/>
        <end position="207"/>
    </location>
</feature>
<feature type="splice variant" id="VSP_038588" description="In isoform 2." evidence="3">
    <location>
        <begin position="1"/>
        <end position="29"/>
    </location>
</feature>
<sequence length="326" mass="37284">MYGIEYTTILTFLISFIFLNYMLKSLTRMMDFIIYRFLFIIVILSPLIKAQNYGINLPITGSMDADYANSTQEETFLTSTLCLYYPTEAASEINDNSWKDTLSQLFLTKGWPTGSVYFKEYTDIASFSVDPQLYCDYNIVLMKYDAALQLDMSELADLILNEWLCNPMDITLYYYQQTDEANKWISMGSSCTIKVCPLNTQTLGIGCLTTDVSTFEEVATTEKLVITDVVDGVNHKLDVTTTTCTIRNCKKLGPRENVAVIQVGGSDILDITADPTTAPQTERMMRINWKKWWQVFYTVVDYVNQIIQAMSKRSRSLNSAAFYYRV</sequence>
<organismHost>
    <name type="scientific">Canis lupus familiaris</name>
    <name type="common">Dog</name>
    <name type="synonym">Canis familiaris</name>
    <dbReference type="NCBI Taxonomy" id="9615"/>
</organismHost>
<reference key="1">
    <citation type="submission" date="1997-04" db="EMBL/GenBank/DDBJ databases">
        <title>VP7 gene sequence of canine rotavirus K9.</title>
        <authorList>
            <person name="Kobayashi N."/>
        </authorList>
    </citation>
    <scope>NUCLEOTIDE SEQUENCE [GENOMIC RNA]</scope>
</reference>
<organism>
    <name type="scientific">Rotavirus A (isolate RVA/Dog/United States/K9/1981/G3P5A[3])</name>
    <name type="common">RV-A</name>
    <dbReference type="NCBI Taxonomy" id="557232"/>
    <lineage>
        <taxon>Viruses</taxon>
        <taxon>Riboviria</taxon>
        <taxon>Orthornavirae</taxon>
        <taxon>Duplornaviricota</taxon>
        <taxon>Resentoviricetes</taxon>
        <taxon>Reovirales</taxon>
        <taxon>Sedoreoviridae</taxon>
        <taxon>Rotavirus</taxon>
        <taxon>Rotavirus A</taxon>
    </lineage>
</organism>
<comment type="function">
    <text evidence="2">Calcium-binding protein that interacts with rotavirus cell receptors once the initial attachment by VP4 has been achieved. Rotavirus attachment and entry into the host cell probably involves multiple sequential contacts between the outer capsid proteins VP4 and VP7, and the cell receptors. Following entry into the host cell, low intracellular or intravesicular Ca(2+) concentration probably causes the calcium-stabilized VP7 trimers to dissociate from the virion. This step is probably necessary for the membrane-disrupting entry step and the release of VP4, which is locked onto the virion by VP7.</text>
</comment>
<comment type="subunit">
    <text evidence="2">Homotrimer; disulfide-linked. 2 Ca(2+) ions bound at each subunit interface in the trimer hold the trimer together. Interacts with the intermediate capsid protein VP6. Interacts with the outer capsid protein VP5*.</text>
</comment>
<comment type="subcellular location">
    <subcellularLocation>
        <location evidence="2">Virion</location>
    </subcellularLocation>
    <subcellularLocation>
        <location evidence="2">Host endoplasmic reticulum lumen</location>
    </subcellularLocation>
    <text evidence="2">The outer layer contains 780 copies of VP7, grouped as 260 trimers. Immature double-layered particles assembled in the cytoplasm bud across the membrane of the endoplasmic reticulum, acquiring during this process a transient lipid membrane that is modified with the ER resident viral glycoproteins NSP4 and VP7; these enveloped particles also contain VP4. As the particles move towards the interior of the ER cisternae, the transient lipid membrane and the non-structural protein NSP4 are lost, while the virus surface proteins VP4 and VP7 rearrange to form the outermost virus protein layer, yielding mature infectious triple-layered particles.</text>
</comment>
<comment type="alternative products">
    <event type="alternative initiation"/>
    <isoform>
        <id>O10695-1</id>
        <name>1</name>
        <sequence type="displayed"/>
    </isoform>
    <isoform>
        <id>O10695-2</id>
        <name>2</name>
        <sequence type="described" ref="VSP_038588"/>
    </isoform>
</comment>
<comment type="PTM">
    <text evidence="2">N-glycosylated.</text>
</comment>
<comment type="PTM">
    <text evidence="2">The N-terminus is blocked possibly by pyroglutamic acid.</text>
</comment>
<comment type="miscellaneous">
    <text evidence="2">Some rotavirus strains are neuraminidase-sensitive and require sialic acid to attach to the cell surface. Some rotavirus strains are integrin-dependent. Some rotavirus strains depend on ganglioside for their entry into the host cell. Hsp70 also seems to be involved in the entry of some strains.</text>
</comment>
<comment type="miscellaneous">
    <text evidence="2">In group A rotaviruses, VP7 defines the G serotype.</text>
</comment>
<comment type="miscellaneous">
    <molecule>Isoform 2</molecule>
    <text evidence="3">Produced by alternative initiation at Met-30 of isoform 1.</text>
</comment>
<comment type="similarity">
    <text evidence="2">Belongs to the rotavirus VP7 family.</text>
</comment>
<name>VP7_ROTD9</name>
<protein>
    <recommendedName>
        <fullName evidence="2">Outer capsid glycoprotein VP7</fullName>
    </recommendedName>
</protein>
<keyword id="KW-0024">Alternative initiation</keyword>
<keyword id="KW-0106">Calcium</keyword>
<keyword id="KW-0167">Capsid protein</keyword>
<keyword id="KW-1015">Disulfide bond</keyword>
<keyword id="KW-0325">Glycoprotein</keyword>
<keyword id="KW-1038">Host endoplasmic reticulum</keyword>
<keyword id="KW-0945">Host-virus interaction</keyword>
<keyword id="KW-0479">Metal-binding</keyword>
<keyword id="KW-1152">Outer capsid protein</keyword>
<keyword id="KW-0732">Signal</keyword>
<keyword id="KW-1146">T=13 icosahedral capsid protein</keyword>
<keyword id="KW-0946">Virion</keyword>
<dbReference type="EMBL" id="U97199">
    <property type="protein sequence ID" value="AAB58063.1"/>
    <property type="molecule type" value="Genomic_RNA"/>
</dbReference>
<dbReference type="SMR" id="O10695"/>
<dbReference type="GO" id="GO:0044166">
    <property type="term" value="C:host cell endoplasmic reticulum lumen"/>
    <property type="evidence" value="ECO:0007669"/>
    <property type="project" value="UniProtKB-SubCell"/>
</dbReference>
<dbReference type="GO" id="GO:0039621">
    <property type="term" value="C:T=13 icosahedral viral capsid"/>
    <property type="evidence" value="ECO:0007669"/>
    <property type="project" value="UniProtKB-UniRule"/>
</dbReference>
<dbReference type="GO" id="GO:0039624">
    <property type="term" value="C:viral outer capsid"/>
    <property type="evidence" value="ECO:0007669"/>
    <property type="project" value="UniProtKB-UniRule"/>
</dbReference>
<dbReference type="GO" id="GO:0046872">
    <property type="term" value="F:metal ion binding"/>
    <property type="evidence" value="ECO:0007669"/>
    <property type="project" value="UniProtKB-KW"/>
</dbReference>
<dbReference type="FunFam" id="2.60.120.800:FF:000001">
    <property type="entry name" value="Outer capsid glycoprotein VP7"/>
    <property type="match status" value="1"/>
</dbReference>
<dbReference type="Gene3D" id="3.40.50.11130">
    <property type="entry name" value="Glycoprotein VP7, domain 1"/>
    <property type="match status" value="1"/>
</dbReference>
<dbReference type="Gene3D" id="2.60.120.800">
    <property type="entry name" value="Rotavirus outer-layer protein VP7, domain 2"/>
    <property type="match status" value="1"/>
</dbReference>
<dbReference type="HAMAP" id="MF_04130">
    <property type="entry name" value="Rota_VP7"/>
    <property type="match status" value="1"/>
</dbReference>
<dbReference type="HAMAP" id="MF_04131">
    <property type="entry name" value="Rota_VP7_A"/>
    <property type="match status" value="1"/>
</dbReference>
<dbReference type="InterPro" id="IPR001963">
    <property type="entry name" value="VP7"/>
</dbReference>
<dbReference type="InterPro" id="IPR042207">
    <property type="entry name" value="VP7_1"/>
</dbReference>
<dbReference type="InterPro" id="IPR042210">
    <property type="entry name" value="VP7_2"/>
</dbReference>
<dbReference type="Pfam" id="PF00434">
    <property type="entry name" value="VP7"/>
    <property type="match status" value="1"/>
</dbReference>
<proteinExistence type="inferred from homology"/>
<evidence type="ECO:0000255" key="1"/>
<evidence type="ECO:0000255" key="2">
    <source>
        <dbReference type="HAMAP-Rule" id="MF_04131"/>
    </source>
</evidence>
<evidence type="ECO:0000305" key="3"/>